<keyword id="KW-0238">DNA-binding</keyword>
<keyword id="KW-0479">Metal-binding</keyword>
<keyword id="KW-0539">Nucleus</keyword>
<keyword id="KW-0804">Transcription</keyword>
<keyword id="KW-0805">Transcription regulation</keyword>
<keyword id="KW-0862">Zinc</keyword>
<gene>
    <name evidence="4" type="primary">AKTR-2</name>
</gene>
<organism>
    <name type="scientific">Alternaria alternata</name>
    <name type="common">Alternaria rot fungus</name>
    <name type="synonym">Torula alternata</name>
    <dbReference type="NCBI Taxonomy" id="5599"/>
    <lineage>
        <taxon>Eukaryota</taxon>
        <taxon>Fungi</taxon>
        <taxon>Dikarya</taxon>
        <taxon>Ascomycota</taxon>
        <taxon>Pezizomycotina</taxon>
        <taxon>Dothideomycetes</taxon>
        <taxon>Pleosporomycetidae</taxon>
        <taxon>Pleosporales</taxon>
        <taxon>Pleosporineae</taxon>
        <taxon>Pleosporaceae</taxon>
        <taxon>Alternaria</taxon>
        <taxon>Alternaria sect. Alternaria</taxon>
        <taxon>Alternaria alternata complex</taxon>
    </lineage>
</organism>
<dbReference type="EMBL" id="AB035493">
    <property type="protein sequence ID" value="BAB07812.1"/>
    <property type="molecule type" value="Genomic_DNA"/>
</dbReference>
<dbReference type="SMR" id="Q9P4U8"/>
<dbReference type="GO" id="GO:0005634">
    <property type="term" value="C:nucleus"/>
    <property type="evidence" value="ECO:0007669"/>
    <property type="project" value="UniProtKB-SubCell"/>
</dbReference>
<dbReference type="GO" id="GO:0003677">
    <property type="term" value="F:DNA binding"/>
    <property type="evidence" value="ECO:0007669"/>
    <property type="project" value="UniProtKB-KW"/>
</dbReference>
<dbReference type="GO" id="GO:0000981">
    <property type="term" value="F:DNA-binding transcription factor activity, RNA polymerase II-specific"/>
    <property type="evidence" value="ECO:0007669"/>
    <property type="project" value="InterPro"/>
</dbReference>
<dbReference type="GO" id="GO:0008270">
    <property type="term" value="F:zinc ion binding"/>
    <property type="evidence" value="ECO:0007669"/>
    <property type="project" value="InterPro"/>
</dbReference>
<dbReference type="CDD" id="cd00067">
    <property type="entry name" value="GAL4"/>
    <property type="match status" value="1"/>
</dbReference>
<dbReference type="Gene3D" id="4.10.240.10">
    <property type="entry name" value="Zn(2)-C6 fungal-type DNA-binding domain"/>
    <property type="match status" value="1"/>
</dbReference>
<dbReference type="InterPro" id="IPR050675">
    <property type="entry name" value="OAF3"/>
</dbReference>
<dbReference type="InterPro" id="IPR036864">
    <property type="entry name" value="Zn2-C6_fun-type_DNA-bd_sf"/>
</dbReference>
<dbReference type="InterPro" id="IPR001138">
    <property type="entry name" value="Zn2Cys6_DnaBD"/>
</dbReference>
<dbReference type="PANTHER" id="PTHR31069:SF31">
    <property type="entry name" value="MONODICTYPHENONE CLUSTER TRANSCRIPTION FACTOR-RELATED"/>
    <property type="match status" value="1"/>
</dbReference>
<dbReference type="PANTHER" id="PTHR31069">
    <property type="entry name" value="OLEATE-ACTIVATED TRANSCRIPTION FACTOR 1-RELATED"/>
    <property type="match status" value="1"/>
</dbReference>
<dbReference type="Pfam" id="PF00172">
    <property type="entry name" value="Zn_clus"/>
    <property type="match status" value="1"/>
</dbReference>
<dbReference type="PRINTS" id="PR00755">
    <property type="entry name" value="AFLATOXINBRP"/>
</dbReference>
<dbReference type="SMART" id="SM00066">
    <property type="entry name" value="GAL4"/>
    <property type="match status" value="1"/>
</dbReference>
<dbReference type="SUPFAM" id="SSF57701">
    <property type="entry name" value="Zn2/Cys6 DNA-binding domain"/>
    <property type="match status" value="1"/>
</dbReference>
<dbReference type="PROSITE" id="PS00463">
    <property type="entry name" value="ZN2_CY6_FUNGAL_1"/>
    <property type="match status" value="1"/>
</dbReference>
<dbReference type="PROSITE" id="PS50048">
    <property type="entry name" value="ZN2_CY6_FUNGAL_2"/>
    <property type="match status" value="1"/>
</dbReference>
<feature type="chain" id="PRO_0000444842" description="Transcription activator AKTR-2">
    <location>
        <begin position="1"/>
        <end position="435"/>
    </location>
</feature>
<feature type="DNA-binding region" description="Zn(2)-C6 fungal-type" evidence="1">
    <location>
        <begin position="16"/>
        <end position="43"/>
    </location>
</feature>
<feature type="region of interest" description="Disordered" evidence="2">
    <location>
        <begin position="49"/>
        <end position="103"/>
    </location>
</feature>
<feature type="compositionally biased region" description="Basic residues" evidence="2">
    <location>
        <begin position="50"/>
        <end position="59"/>
    </location>
</feature>
<accession>Q9P4U8</accession>
<sequence length="435" mass="48235">MLQCAPKKNERLRGSCDFCTQSKLRCNKNKPSCRRCTIQQQVCVYSVARRTGRPPKHPRRADDSQETSGQHGHQDPMTSAPADSCEQQSSHLDLEGDDTDFTLVDGRTTAEGRATVAPPVLDNAFLMGETFEFNSLLDDPLVQSEDIFSFSPHIPRGEKGVHMASFHALNESTSPCSPSALLSIDVPQLPTNFRFLESFIGSELHGRNEPHPVEQPDEMEKTYDKGSILLGLDSAINAITNNGKDEPSISGWTVARPHSKHLCFCSMSMSKLQVLVSHPALCRQNSRTPFDMVLFLEEFVFGIHSDVLRCLICQSRSLHSLASLCICTDWVVEALVDVAQDLSLGQDNLGGLRAEICPPKNGSSIYVGRLILADQFRESCTRSLVKYRLRKLIPIMDTMIKLNYRGAGGALSQAIRTMVEDVRHKIESALGMMEL</sequence>
<name>AKTR2_ALTAL</name>
<protein>
    <recommendedName>
        <fullName evidence="4">Transcription activator AKTR-2</fullName>
    </recommendedName>
    <alternativeName>
        <fullName evidence="4">AK-toxin biosynthesis regulator 2</fullName>
    </alternativeName>
</protein>
<evidence type="ECO:0000255" key="1">
    <source>
        <dbReference type="PROSITE-ProRule" id="PRU00227"/>
    </source>
</evidence>
<evidence type="ECO:0000256" key="2">
    <source>
        <dbReference type="SAM" id="MobiDB-lite"/>
    </source>
</evidence>
<evidence type="ECO:0000269" key="3">
    <source>
    </source>
</evidence>
<evidence type="ECO:0000303" key="4">
    <source>
    </source>
</evidence>
<evidence type="ECO:0000303" key="5">
    <source>
    </source>
</evidence>
<evidence type="ECO:0000305" key="6">
    <source>
    </source>
</evidence>
<comment type="function">
    <text evidence="5 6">Transcription factor that regulates the expression of the gene clusters that mediate the biosynthesis of the host-selective toxins (HSTs) AK-toxins responsible for Japanese pear black spot disease by the Japanese pear pathotype (Probable). AK-toxins are esters of 9,10-epoxy 8-hydroxy 9-methyldecatrienoic acid (EDA) (PubMed:22846083). On cellular level, AK-toxins affect plasma membrane of susceptible cells and cause a sudden increase in loss of K(+) after a few minutes of toxin treatment (PubMed:22846083).</text>
</comment>
<comment type="subcellular location">
    <subcellularLocation>
        <location evidence="1">Nucleus</location>
    </subcellularLocation>
</comment>
<comment type="miscellaneous">
    <text evidence="3">Gene clusters encoding host-selective toxins (HSTs) are localized on conditionally dispensable chromosomes (CDCs), also called supernumerary chromosomes, where they are present in multiple copies (PubMed:10975654). The CDCs are not essential for saprophytic growth but controls host-selective pathogenicity (PubMed:10975654).</text>
</comment>
<proteinExistence type="inferred from homology"/>
<reference key="1">
    <citation type="journal article" date="2000" name="Mol. Plant Microbe Interact.">
        <title>Structural and functional complexity of the genomic region controlling AK-toxin biosynthesis and pathogenicity in the Japanese pear pathotype of Alternaria alternata.</title>
        <authorList>
            <person name="Tanaka A."/>
            <person name="Tsuge T."/>
        </authorList>
    </citation>
    <scope>NUCLEOTIDE SEQUENCE [GENOMIC DNA]</scope>
    <scope>FUNCTION</scope>
    <source>
        <strain>15A</strain>
    </source>
</reference>
<reference key="2">
    <citation type="journal article" date="2013" name="FEMS Microbiol. Rev.">
        <title>Host-selective toxins produced by the plant pathogenic fungus Alternaria alternata.</title>
        <authorList>
            <person name="Tsuge T."/>
            <person name="Harimoto Y."/>
            <person name="Akimitsu K."/>
            <person name="Ohtani K."/>
            <person name="Kodama M."/>
            <person name="Akagi Y."/>
            <person name="Egusa M."/>
            <person name="Yamamoto M."/>
            <person name="Otani H."/>
        </authorList>
    </citation>
    <scope>REVIEW ON HOST-SELECTIVE TOXINS</scope>
</reference>